<name>NONA_DROLR</name>
<proteinExistence type="evidence at transcript level"/>
<organism>
    <name type="scientific">Drosophila littoralis</name>
    <name type="common">Fruit fly</name>
    <dbReference type="NCBI Taxonomy" id="47316"/>
    <lineage>
        <taxon>Eukaryota</taxon>
        <taxon>Metazoa</taxon>
        <taxon>Ecdysozoa</taxon>
        <taxon>Arthropoda</taxon>
        <taxon>Hexapoda</taxon>
        <taxon>Insecta</taxon>
        <taxon>Pterygota</taxon>
        <taxon>Neoptera</taxon>
        <taxon>Endopterygota</taxon>
        <taxon>Diptera</taxon>
        <taxon>Brachycera</taxon>
        <taxon>Muscomorpha</taxon>
        <taxon>Ephydroidea</taxon>
        <taxon>Drosophilidae</taxon>
        <taxon>Drosophila</taxon>
    </lineage>
</organism>
<reference key="1">
    <citation type="submission" date="2000-10" db="EMBL/GenBank/DDBJ databases">
        <title>Intra- and interspecific nucleotide variation at the nonA gene in Drosophila littoralis and D. virilis.</title>
        <authorList>
            <person name="Huttunen S."/>
            <person name="Campesan S."/>
            <person name="Hoikkala A."/>
        </authorList>
    </citation>
    <scope>NUCLEOTIDE SEQUENCE [MRNA]</scope>
    <source>
        <strain>1007</strain>
    </source>
</reference>
<comment type="function">
    <text evidence="1">Required for normal vision and courtship behavior in Drosophila.</text>
</comment>
<keyword id="KW-0175">Coiled coil</keyword>
<keyword id="KW-0677">Repeat</keyword>
<keyword id="KW-0694">RNA-binding</keyword>
<keyword id="KW-0716">Sensory transduction</keyword>
<keyword id="KW-0844">Vision</keyword>
<sequence>MENSVKMDTSGNSTPLPQRQARANNQPNKNIGKHGPQKQNEGASDGGPAEKRQRFGPNNQNGGGGSVGGGGGGGGGSGGGGGGGGQNQNKNFANKGGFGGGGNRNRNRGGNQNRSNFQNQNQNQKSTTDAPKADGGNLNDKSNEANNANQSNSNSAAQAQAQLQAQAQAHAQAQAQAHAQAQAQAQAQAHAHAQNQAFRARGGGGGGGGGGGGGGGGGGGGRDRNRGSRGGGGGGQNSGGGNNSQRGDDFFIAQRLRSISGPTHELPPIEVAQETKFSGRNRLYVGNLTNDITDEELREMFKPYGEIGEIFSNLEKNFTFLKVDYHINAEKAKRALDGSMRKGRQLRVRFAPNATILRVSNLTPFVSNELLYKSFEIFGPIERASITVDDRGKHLGEGTVEFAKKSSASACLRLCNEKCFFLTASLRPCLVEPMEVNDDNDGLPEKALNKKLQEFNQERSVGPRFADLNSFEHEYGSRWKQLHDLFKSKQDALKRELKMEEEKLDAQMEYARYGQETELSRQELRKRESDNERKKLEWEMREKQAEEMRKREEETMRRHQTEMQSRMVRQEEDMRRRQQENTLFMQAQQLNSLLDQQEGFGGGNNGGGGGGGGGGGGVGGGVGNSNFDNFGGNSNSPFEVFRGNNNSSMAGNNAGPGANNQQQDSFAAFEFGVNNMNQGGNQRGNNGGNNVPWGRRRF</sequence>
<protein>
    <recommendedName>
        <fullName>Protein no-on-transient A</fullName>
    </recommendedName>
</protein>
<gene>
    <name type="primary">nonA</name>
</gene>
<evidence type="ECO:0000250" key="1"/>
<evidence type="ECO:0000255" key="2"/>
<evidence type="ECO:0000255" key="3">
    <source>
        <dbReference type="PROSITE-ProRule" id="PRU00176"/>
    </source>
</evidence>
<evidence type="ECO:0000256" key="4">
    <source>
        <dbReference type="SAM" id="MobiDB-lite"/>
    </source>
</evidence>
<dbReference type="EMBL" id="AJ296178">
    <property type="protein sequence ID" value="CAC14308.1"/>
    <property type="molecule type" value="mRNA"/>
</dbReference>
<dbReference type="SMR" id="Q9GRX4"/>
<dbReference type="GO" id="GO:0003723">
    <property type="term" value="F:RNA binding"/>
    <property type="evidence" value="ECO:0007669"/>
    <property type="project" value="UniProtKB-KW"/>
</dbReference>
<dbReference type="GO" id="GO:0007601">
    <property type="term" value="P:visual perception"/>
    <property type="evidence" value="ECO:0007669"/>
    <property type="project" value="UniProtKB-KW"/>
</dbReference>
<dbReference type="CDD" id="cd12945">
    <property type="entry name" value="NOPS_NONA_like"/>
    <property type="match status" value="1"/>
</dbReference>
<dbReference type="CDD" id="cd12332">
    <property type="entry name" value="RRM1_p54nrb_like"/>
    <property type="match status" value="1"/>
</dbReference>
<dbReference type="CDD" id="cd12333">
    <property type="entry name" value="RRM2_p54nrb_like"/>
    <property type="match status" value="1"/>
</dbReference>
<dbReference type="FunFam" id="3.30.70.330:FF:000043">
    <property type="entry name" value="paraspeckle component 1 isoform X1"/>
    <property type="match status" value="1"/>
</dbReference>
<dbReference type="FunFam" id="3.30.70.330:FF:000513">
    <property type="entry name" value="Splicing factor, proline-and glutamine-rich"/>
    <property type="match status" value="1"/>
</dbReference>
<dbReference type="Gene3D" id="3.30.70.330">
    <property type="match status" value="2"/>
</dbReference>
<dbReference type="Gene3D" id="6.10.250.1170">
    <property type="match status" value="1"/>
</dbReference>
<dbReference type="InterPro" id="IPR012975">
    <property type="entry name" value="NOPS"/>
</dbReference>
<dbReference type="InterPro" id="IPR012677">
    <property type="entry name" value="Nucleotide-bd_a/b_plait_sf"/>
</dbReference>
<dbReference type="InterPro" id="IPR035979">
    <property type="entry name" value="RBD_domain_sf"/>
</dbReference>
<dbReference type="InterPro" id="IPR000504">
    <property type="entry name" value="RRM_dom"/>
</dbReference>
<dbReference type="PANTHER" id="PTHR23189">
    <property type="entry name" value="RNA RECOGNITION MOTIF-CONTAINING"/>
    <property type="match status" value="1"/>
</dbReference>
<dbReference type="Pfam" id="PF08075">
    <property type="entry name" value="NOPS"/>
    <property type="match status" value="1"/>
</dbReference>
<dbReference type="Pfam" id="PF00076">
    <property type="entry name" value="RRM_1"/>
    <property type="match status" value="2"/>
</dbReference>
<dbReference type="SMART" id="SM00360">
    <property type="entry name" value="RRM"/>
    <property type="match status" value="2"/>
</dbReference>
<dbReference type="SUPFAM" id="SSF54928">
    <property type="entry name" value="RNA-binding domain, RBD"/>
    <property type="match status" value="1"/>
</dbReference>
<dbReference type="PROSITE" id="PS50102">
    <property type="entry name" value="RRM"/>
    <property type="match status" value="2"/>
</dbReference>
<accession>Q9GRX4</accession>
<feature type="chain" id="PRO_0000081661" description="Protein no-on-transient A">
    <location>
        <begin position="1"/>
        <end position="698"/>
    </location>
</feature>
<feature type="domain" description="RRM 1" evidence="3">
    <location>
        <begin position="281"/>
        <end position="353"/>
    </location>
</feature>
<feature type="domain" description="RRM 2" evidence="3">
    <location>
        <begin position="355"/>
        <end position="441"/>
    </location>
</feature>
<feature type="region of interest" description="Disordered" evidence="4">
    <location>
        <begin position="1"/>
        <end position="247"/>
    </location>
</feature>
<feature type="region of interest" description="Disordered" evidence="4">
    <location>
        <begin position="515"/>
        <end position="571"/>
    </location>
</feature>
<feature type="region of interest" description="Disordered" evidence="4">
    <location>
        <begin position="597"/>
        <end position="698"/>
    </location>
</feature>
<feature type="coiled-coil region" evidence="2">
    <location>
        <begin position="484"/>
        <end position="582"/>
    </location>
</feature>
<feature type="compositionally biased region" description="Polar residues" evidence="4">
    <location>
        <begin position="1"/>
        <end position="29"/>
    </location>
</feature>
<feature type="compositionally biased region" description="Gly residues" evidence="4">
    <location>
        <begin position="61"/>
        <end position="86"/>
    </location>
</feature>
<feature type="compositionally biased region" description="Low complexity" evidence="4">
    <location>
        <begin position="108"/>
        <end position="126"/>
    </location>
</feature>
<feature type="compositionally biased region" description="Low complexity" evidence="4">
    <location>
        <begin position="145"/>
        <end position="197"/>
    </location>
</feature>
<feature type="compositionally biased region" description="Gly residues" evidence="4">
    <location>
        <begin position="201"/>
        <end position="220"/>
    </location>
</feature>
<feature type="compositionally biased region" description="Gly residues" evidence="4">
    <location>
        <begin position="228"/>
        <end position="242"/>
    </location>
</feature>
<feature type="compositionally biased region" description="Basic and acidic residues" evidence="4">
    <location>
        <begin position="518"/>
        <end position="561"/>
    </location>
</feature>
<feature type="compositionally biased region" description="Gly residues" evidence="4">
    <location>
        <begin position="599"/>
        <end position="623"/>
    </location>
</feature>
<feature type="compositionally biased region" description="Low complexity" evidence="4">
    <location>
        <begin position="624"/>
        <end position="636"/>
    </location>
</feature>
<feature type="compositionally biased region" description="Low complexity" evidence="4">
    <location>
        <begin position="643"/>
        <end position="660"/>
    </location>
</feature>